<gene>
    <name type="primary">PMP3</name>
    <name type="synonym">SNA1</name>
    <name type="ordered locus">YDR276C</name>
</gene>
<reference key="1">
    <citation type="journal article" date="2000" name="EMBO J.">
        <title>Membrane hyperpolarization and salt sensitivity induced by deletion of PMP3, a highly conserved small protein of yeast plasma membrane.</title>
        <authorList>
            <person name="Navarre C."/>
            <person name="Goffeau A."/>
        </authorList>
    </citation>
    <scope>NUCLEOTIDE SEQUENCE [GENOMIC DNA]</scope>
    <scope>PROTEIN SEQUENCE OF 1-25</scope>
    <scope>CHARACTERIZATION</scope>
    <scope>SUBCELLULAR LOCATION</scope>
    <source>
        <strain>ATCC 201238 / W303-1B</strain>
    </source>
</reference>
<reference key="2">
    <citation type="journal article" date="1997" name="Nature">
        <title>The nucleotide sequence of Saccharomyces cerevisiae chromosome IV.</title>
        <authorList>
            <person name="Jacq C."/>
            <person name="Alt-Moerbe J."/>
            <person name="Andre B."/>
            <person name="Arnold W."/>
            <person name="Bahr A."/>
            <person name="Ballesta J.P.G."/>
            <person name="Bargues M."/>
            <person name="Baron L."/>
            <person name="Becker A."/>
            <person name="Biteau N."/>
            <person name="Bloecker H."/>
            <person name="Blugeon C."/>
            <person name="Boskovic J."/>
            <person name="Brandt P."/>
            <person name="Brueckner M."/>
            <person name="Buitrago M.J."/>
            <person name="Coster F."/>
            <person name="Delaveau T."/>
            <person name="del Rey F."/>
            <person name="Dujon B."/>
            <person name="Eide L.G."/>
            <person name="Garcia-Cantalejo J.M."/>
            <person name="Goffeau A."/>
            <person name="Gomez-Peris A."/>
            <person name="Granotier C."/>
            <person name="Hanemann V."/>
            <person name="Hankeln T."/>
            <person name="Hoheisel J.D."/>
            <person name="Jaeger W."/>
            <person name="Jimenez A."/>
            <person name="Jonniaux J.-L."/>
            <person name="Kraemer C."/>
            <person name="Kuester H."/>
            <person name="Laamanen P."/>
            <person name="Legros Y."/>
            <person name="Louis E.J."/>
            <person name="Moeller-Rieker S."/>
            <person name="Monnet A."/>
            <person name="Moro M."/>
            <person name="Mueller-Auer S."/>
            <person name="Nussbaumer B."/>
            <person name="Paricio N."/>
            <person name="Paulin L."/>
            <person name="Perea J."/>
            <person name="Perez-Alonso M."/>
            <person name="Perez-Ortin J.E."/>
            <person name="Pohl T.M."/>
            <person name="Prydz H."/>
            <person name="Purnelle B."/>
            <person name="Rasmussen S.W."/>
            <person name="Remacha M.A."/>
            <person name="Revuelta J.L."/>
            <person name="Rieger M."/>
            <person name="Salom D."/>
            <person name="Saluz H.P."/>
            <person name="Saiz J.E."/>
            <person name="Saren A.-M."/>
            <person name="Schaefer M."/>
            <person name="Scharfe M."/>
            <person name="Schmidt E.R."/>
            <person name="Schneider C."/>
            <person name="Scholler P."/>
            <person name="Schwarz S."/>
            <person name="Soler-Mira A."/>
            <person name="Urrestarazu L.A."/>
            <person name="Verhasselt P."/>
            <person name="Vissers S."/>
            <person name="Voet M."/>
            <person name="Volckaert G."/>
            <person name="Wagner G."/>
            <person name="Wambutt R."/>
            <person name="Wedler E."/>
            <person name="Wedler H."/>
            <person name="Woelfl S."/>
            <person name="Harris D.E."/>
            <person name="Bowman S."/>
            <person name="Brown D."/>
            <person name="Churcher C.M."/>
            <person name="Connor R."/>
            <person name="Dedman K."/>
            <person name="Gentles S."/>
            <person name="Hamlin N."/>
            <person name="Hunt S."/>
            <person name="Jones L."/>
            <person name="McDonald S."/>
            <person name="Murphy L.D."/>
            <person name="Niblett D."/>
            <person name="Odell C."/>
            <person name="Oliver K."/>
            <person name="Rajandream M.A."/>
            <person name="Richards C."/>
            <person name="Shore L."/>
            <person name="Walsh S.V."/>
            <person name="Barrell B.G."/>
            <person name="Dietrich F.S."/>
            <person name="Mulligan J.T."/>
            <person name="Allen E."/>
            <person name="Araujo R."/>
            <person name="Aviles E."/>
            <person name="Berno A."/>
            <person name="Carpenter J."/>
            <person name="Chen E."/>
            <person name="Cherry J.M."/>
            <person name="Chung E."/>
            <person name="Duncan M."/>
            <person name="Hunicke-Smith S."/>
            <person name="Hyman R.W."/>
            <person name="Komp C."/>
            <person name="Lashkari D."/>
            <person name="Lew H."/>
            <person name="Lin D."/>
            <person name="Mosedale D."/>
            <person name="Nakahara K."/>
            <person name="Namath A."/>
            <person name="Oefner P."/>
            <person name="Oh C."/>
            <person name="Petel F.X."/>
            <person name="Roberts D."/>
            <person name="Schramm S."/>
            <person name="Schroeder M."/>
            <person name="Shogren T."/>
            <person name="Shroff N."/>
            <person name="Winant A."/>
            <person name="Yelton M.A."/>
            <person name="Botstein D."/>
            <person name="Davis R.W."/>
            <person name="Johnston M."/>
            <person name="Andrews S."/>
            <person name="Brinkman R."/>
            <person name="Cooper J."/>
            <person name="Ding H."/>
            <person name="Du Z."/>
            <person name="Favello A."/>
            <person name="Fulton L."/>
            <person name="Gattung S."/>
            <person name="Greco T."/>
            <person name="Hallsworth K."/>
            <person name="Hawkins J."/>
            <person name="Hillier L.W."/>
            <person name="Jier M."/>
            <person name="Johnson D."/>
            <person name="Johnston L."/>
            <person name="Kirsten J."/>
            <person name="Kucaba T."/>
            <person name="Langston Y."/>
            <person name="Latreille P."/>
            <person name="Le T."/>
            <person name="Mardis E."/>
            <person name="Menezes S."/>
            <person name="Miller N."/>
            <person name="Nhan M."/>
            <person name="Pauley A."/>
            <person name="Peluso D."/>
            <person name="Rifkin L."/>
            <person name="Riles L."/>
            <person name="Taich A."/>
            <person name="Trevaskis E."/>
            <person name="Vignati D."/>
            <person name="Wilcox L."/>
            <person name="Wohldman P."/>
            <person name="Vaudin M."/>
            <person name="Wilson R."/>
            <person name="Waterston R."/>
            <person name="Albermann K."/>
            <person name="Hani J."/>
            <person name="Heumann K."/>
            <person name="Kleine K."/>
            <person name="Mewes H.-W."/>
            <person name="Zollner A."/>
            <person name="Zaccaria P."/>
        </authorList>
    </citation>
    <scope>NUCLEOTIDE SEQUENCE [LARGE SCALE GENOMIC DNA]</scope>
    <source>
        <strain>ATCC 204508 / S288c</strain>
    </source>
</reference>
<reference key="3">
    <citation type="journal article" date="2014" name="G3 (Bethesda)">
        <title>The reference genome sequence of Saccharomyces cerevisiae: Then and now.</title>
        <authorList>
            <person name="Engel S.R."/>
            <person name="Dietrich F.S."/>
            <person name="Fisk D.G."/>
            <person name="Binkley G."/>
            <person name="Balakrishnan R."/>
            <person name="Costanzo M.C."/>
            <person name="Dwight S.S."/>
            <person name="Hitz B.C."/>
            <person name="Karra K."/>
            <person name="Nash R.S."/>
            <person name="Weng S."/>
            <person name="Wong E.D."/>
            <person name="Lloyd P."/>
            <person name="Skrzypek M.S."/>
            <person name="Miyasato S.R."/>
            <person name="Simison M."/>
            <person name="Cherry J.M."/>
        </authorList>
    </citation>
    <scope>GENOME REANNOTATION</scope>
    <source>
        <strain>ATCC 204508 / S288c</strain>
    </source>
</reference>
<reference key="4">
    <citation type="journal article" date="2007" name="Genome Res.">
        <title>Approaching a complete repository of sequence-verified protein-encoding clones for Saccharomyces cerevisiae.</title>
        <authorList>
            <person name="Hu Y."/>
            <person name="Rolfs A."/>
            <person name="Bhullar B."/>
            <person name="Murthy T.V.S."/>
            <person name="Zhu C."/>
            <person name="Berger M.F."/>
            <person name="Camargo A.A."/>
            <person name="Kelley F."/>
            <person name="McCarron S."/>
            <person name="Jepson D."/>
            <person name="Richardson A."/>
            <person name="Raphael J."/>
            <person name="Moreira D."/>
            <person name="Taycher E."/>
            <person name="Zuo D."/>
            <person name="Mohr S."/>
            <person name="Kane M.F."/>
            <person name="Williamson J."/>
            <person name="Simpson A.J.G."/>
            <person name="Bulyk M.L."/>
            <person name="Harlow E."/>
            <person name="Marsischky G."/>
            <person name="Kolodner R.D."/>
            <person name="LaBaer J."/>
        </authorList>
    </citation>
    <scope>NUCLEOTIDE SEQUENCE [GENOMIC DNA]</scope>
    <source>
        <strain>ATCC 204508 / S288c</strain>
    </source>
</reference>
<sequence length="55" mass="6138">MDSAKIINIILSLFLPPVAVFLARGWGTDCIVDIILTILAWFPGMLYALYIVLQD</sequence>
<keyword id="KW-1003">Cell membrane</keyword>
<keyword id="KW-0903">Direct protein sequencing</keyword>
<keyword id="KW-0472">Membrane</keyword>
<keyword id="KW-1185">Reference proteome</keyword>
<keyword id="KW-0812">Transmembrane</keyword>
<keyword id="KW-1133">Transmembrane helix</keyword>
<proteinExistence type="evidence at protein level"/>
<organism>
    <name type="scientific">Saccharomyces cerevisiae (strain ATCC 204508 / S288c)</name>
    <name type="common">Baker's yeast</name>
    <dbReference type="NCBI Taxonomy" id="559292"/>
    <lineage>
        <taxon>Eukaryota</taxon>
        <taxon>Fungi</taxon>
        <taxon>Dikarya</taxon>
        <taxon>Ascomycota</taxon>
        <taxon>Saccharomycotina</taxon>
        <taxon>Saccharomycetes</taxon>
        <taxon>Saccharomycetales</taxon>
        <taxon>Saccharomycetaceae</taxon>
        <taxon>Saccharomyces</taxon>
    </lineage>
</organism>
<accession>P87284</accession>
<accession>D6VSQ7</accession>
<name>PMP3_YEAST</name>
<dbReference type="EMBL" id="X91499">
    <property type="protein sequence ID" value="CAA62799.1"/>
    <property type="molecule type" value="Genomic_DNA"/>
</dbReference>
<dbReference type="EMBL" id="U51030">
    <property type="protein sequence ID" value="AAB64465.1"/>
    <property type="molecule type" value="Genomic_DNA"/>
</dbReference>
<dbReference type="EMBL" id="AY557718">
    <property type="protein sequence ID" value="AAS56044.1"/>
    <property type="molecule type" value="Genomic_DNA"/>
</dbReference>
<dbReference type="EMBL" id="BK006938">
    <property type="protein sequence ID" value="DAA12117.1"/>
    <property type="molecule type" value="Genomic_DNA"/>
</dbReference>
<dbReference type="PIR" id="S70224">
    <property type="entry name" value="S70224"/>
</dbReference>
<dbReference type="RefSeq" id="NP_010562.1">
    <property type="nucleotide sequence ID" value="NM_001180584.1"/>
</dbReference>
<dbReference type="SMR" id="P87284"/>
<dbReference type="BioGRID" id="32329">
    <property type="interactions" value="523"/>
</dbReference>
<dbReference type="DIP" id="DIP-7280N"/>
<dbReference type="FunCoup" id="P87284">
    <property type="interactions" value="1528"/>
</dbReference>
<dbReference type="IntAct" id="P87284">
    <property type="interactions" value="16"/>
</dbReference>
<dbReference type="MINT" id="P87284"/>
<dbReference type="STRING" id="4932.YDR276C"/>
<dbReference type="TCDB" id="9.B.12.1.2">
    <property type="family name" value="the sensitivity to sodium or salt stress-induced hydrophobic peptide (sna) family"/>
</dbReference>
<dbReference type="PaxDb" id="4932-YDR276C"/>
<dbReference type="PeptideAtlas" id="P87284"/>
<dbReference type="TopDownProteomics" id="P87284"/>
<dbReference type="DNASU" id="851869"/>
<dbReference type="EnsemblFungi" id="YDR276C_mRNA">
    <property type="protein sequence ID" value="YDR276C"/>
    <property type="gene ID" value="YDR276C"/>
</dbReference>
<dbReference type="GeneID" id="851869"/>
<dbReference type="KEGG" id="sce:YDR276C"/>
<dbReference type="AGR" id="SGD:S000002684"/>
<dbReference type="SGD" id="S000002684">
    <property type="gene designation" value="PMP3"/>
</dbReference>
<dbReference type="VEuPathDB" id="FungiDB:YDR276C"/>
<dbReference type="eggNOG" id="KOG1773">
    <property type="taxonomic scope" value="Eukaryota"/>
</dbReference>
<dbReference type="HOGENOM" id="CLU_107649_6_2_1"/>
<dbReference type="InParanoid" id="P87284"/>
<dbReference type="OMA" id="GWGRECI"/>
<dbReference type="OrthoDB" id="2802411at2759"/>
<dbReference type="BioCyc" id="YEAST:G3O-29842-MONOMER"/>
<dbReference type="BioGRID-ORCS" id="851869">
    <property type="hits" value="0 hits in 10 CRISPR screens"/>
</dbReference>
<dbReference type="PRO" id="PR:P87284"/>
<dbReference type="Proteomes" id="UP000002311">
    <property type="component" value="Chromosome IV"/>
</dbReference>
<dbReference type="RNAct" id="P87284">
    <property type="molecule type" value="protein"/>
</dbReference>
<dbReference type="GO" id="GO:0071944">
    <property type="term" value="C:cell periphery"/>
    <property type="evidence" value="ECO:0007005"/>
    <property type="project" value="SGD"/>
</dbReference>
<dbReference type="GO" id="GO:0005886">
    <property type="term" value="C:plasma membrane"/>
    <property type="evidence" value="ECO:0000314"/>
    <property type="project" value="SGD"/>
</dbReference>
<dbReference type="GO" id="GO:0070300">
    <property type="term" value="F:phosphatidic acid binding"/>
    <property type="evidence" value="ECO:0000314"/>
    <property type="project" value="SGD"/>
</dbReference>
<dbReference type="GO" id="GO:0080025">
    <property type="term" value="F:phosphatidylinositol-3,5-bisphosphate binding"/>
    <property type="evidence" value="ECO:0000314"/>
    <property type="project" value="SGD"/>
</dbReference>
<dbReference type="GO" id="GO:0032266">
    <property type="term" value="F:phosphatidylinositol-3-phosphate binding"/>
    <property type="evidence" value="ECO:0000314"/>
    <property type="project" value="SGD"/>
</dbReference>
<dbReference type="GO" id="GO:0046625">
    <property type="term" value="F:sphingolipid binding"/>
    <property type="evidence" value="ECO:0000314"/>
    <property type="project" value="SGD"/>
</dbReference>
<dbReference type="GO" id="GO:0006812">
    <property type="term" value="P:monoatomic cation transport"/>
    <property type="evidence" value="ECO:0000315"/>
    <property type="project" value="SGD"/>
</dbReference>
<dbReference type="GO" id="GO:0042391">
    <property type="term" value="P:regulation of membrane potential"/>
    <property type="evidence" value="ECO:0000315"/>
    <property type="project" value="SGD"/>
</dbReference>
<dbReference type="InterPro" id="IPR000612">
    <property type="entry name" value="PMP3"/>
</dbReference>
<dbReference type="PANTHER" id="PTHR21659">
    <property type="entry name" value="HYDROPHOBIC PROTEIN RCI2 LOW TEMPERATURE AND SALT RESPONSIVE PROTEIN LTI6 -RELATED"/>
    <property type="match status" value="1"/>
</dbReference>
<dbReference type="PANTHER" id="PTHR21659:SF42">
    <property type="entry name" value="UPF0057 MEMBRANE PROTEIN ZK632.10-RELATED"/>
    <property type="match status" value="1"/>
</dbReference>
<dbReference type="Pfam" id="PF01679">
    <property type="entry name" value="Pmp3"/>
    <property type="match status" value="1"/>
</dbReference>
<dbReference type="PROSITE" id="PS01309">
    <property type="entry name" value="UPF0057"/>
    <property type="match status" value="1"/>
</dbReference>
<feature type="chain" id="PRO_0000193987" description="Plasma membrane proteolipid 3">
    <location>
        <begin position="1"/>
        <end position="55"/>
    </location>
</feature>
<feature type="transmembrane region" description="Helical" evidence="1">
    <location>
        <begin position="3"/>
        <end position="23"/>
    </location>
</feature>
<feature type="transmembrane region" description="Helical" evidence="1">
    <location>
        <begin position="31"/>
        <end position="51"/>
    </location>
</feature>
<comment type="function">
    <text>Plays a role in the regulation of membrane potential. Could mediate a proton leak.</text>
</comment>
<comment type="subcellular location">
    <subcellularLocation>
        <location evidence="2">Cell membrane</location>
        <topology evidence="2">Multi-pass membrane protein</topology>
    </subcellularLocation>
</comment>
<comment type="similarity">
    <text evidence="2">Belongs to the UPF0057 (PMP3) family.</text>
</comment>
<protein>
    <recommendedName>
        <fullName>Plasma membrane proteolipid 3</fullName>
    </recommendedName>
</protein>
<evidence type="ECO:0000255" key="1"/>
<evidence type="ECO:0000305" key="2"/>